<protein>
    <recommendedName>
        <fullName>Cysteine--tRNA ligase</fullName>
        <ecNumber>6.1.1.16</ecNumber>
    </recommendedName>
    <alternativeName>
        <fullName>Cysteinyl-tRNA synthetase</fullName>
        <shortName>CysRS</shortName>
    </alternativeName>
</protein>
<sequence length="487" mass="54601">MSSLHIYNSLTRTKEPFKPIHPGLATIYVCGPTVYGHAHLGHAKSYVSFDVVVRWLRHVGEEQGYKVRYVQNITDVGHLTDDADEGEDKIQKQARQERIEPMEVAQYYTRSFYEDMDRLGVERPNIAPTATGHIPEQIALVERLIESGHAYESNGNVYFDVNSFEGYGKLSGRTDQEALQSGGRVAERSDKRNPSDFALWKKAEPGHIMKWQSPWGEGYPGWHLECSAMAMKYLGDTIDIHGGGMENKFPHHDCEIAQSEAATGKPFVRYWMHNNMVTVDGVKMGKSLKNFVNLKELFGKFDPLVIRFFILQSHYRSPLDFSEAAIRASQSGFEKLQETYKRLVESAEGKGQLDVATFEQKITDALNDDFNTPVAIAVLFEFIKALNGALDKDGLDAASKSGAQNLFDSYAGKVLGILKSRDELLAGESGESAQTLNDVMAVLLELRKEARASKDFATSDKIRDLLMERGIEIKDTREGATWSKKKA</sequence>
<keyword id="KW-0030">Aminoacyl-tRNA synthetase</keyword>
<keyword id="KW-0067">ATP-binding</keyword>
<keyword id="KW-0963">Cytoplasm</keyword>
<keyword id="KW-0436">Ligase</keyword>
<keyword id="KW-0479">Metal-binding</keyword>
<keyword id="KW-0547">Nucleotide-binding</keyword>
<keyword id="KW-0648">Protein biosynthesis</keyword>
<keyword id="KW-1185">Reference proteome</keyword>
<keyword id="KW-0862">Zinc</keyword>
<reference key="1">
    <citation type="journal article" date="2002" name="Proc. Natl. Acad. Sci. U.S.A.">
        <title>The complete genome sequence of Chlorobium tepidum TLS, a photosynthetic, anaerobic, green-sulfur bacterium.</title>
        <authorList>
            <person name="Eisen J.A."/>
            <person name="Nelson K.E."/>
            <person name="Paulsen I.T."/>
            <person name="Heidelberg J.F."/>
            <person name="Wu M."/>
            <person name="Dodson R.J."/>
            <person name="DeBoy R.T."/>
            <person name="Gwinn M.L."/>
            <person name="Nelson W.C."/>
            <person name="Haft D.H."/>
            <person name="Hickey E.K."/>
            <person name="Peterson J.D."/>
            <person name="Durkin A.S."/>
            <person name="Kolonay J.F."/>
            <person name="Yang F."/>
            <person name="Holt I.E."/>
            <person name="Umayam L.A."/>
            <person name="Mason T.M."/>
            <person name="Brenner M."/>
            <person name="Shea T.P."/>
            <person name="Parksey D.S."/>
            <person name="Nierman W.C."/>
            <person name="Feldblyum T.V."/>
            <person name="Hansen C.L."/>
            <person name="Craven M.B."/>
            <person name="Radune D."/>
            <person name="Vamathevan J.J."/>
            <person name="Khouri H.M."/>
            <person name="White O."/>
            <person name="Gruber T.M."/>
            <person name="Ketchum K.A."/>
            <person name="Venter J.C."/>
            <person name="Tettelin H."/>
            <person name="Bryant D.A."/>
            <person name="Fraser C.M."/>
        </authorList>
    </citation>
    <scope>NUCLEOTIDE SEQUENCE [LARGE SCALE GENOMIC DNA]</scope>
    <source>
        <strain>ATCC 49652 / DSM 12025 / NBRC 103806 / TLS</strain>
    </source>
</reference>
<proteinExistence type="inferred from homology"/>
<comment type="catalytic activity">
    <reaction>
        <text>tRNA(Cys) + L-cysteine + ATP = L-cysteinyl-tRNA(Cys) + AMP + diphosphate</text>
        <dbReference type="Rhea" id="RHEA:17773"/>
        <dbReference type="Rhea" id="RHEA-COMP:9661"/>
        <dbReference type="Rhea" id="RHEA-COMP:9679"/>
        <dbReference type="ChEBI" id="CHEBI:30616"/>
        <dbReference type="ChEBI" id="CHEBI:33019"/>
        <dbReference type="ChEBI" id="CHEBI:35235"/>
        <dbReference type="ChEBI" id="CHEBI:78442"/>
        <dbReference type="ChEBI" id="CHEBI:78517"/>
        <dbReference type="ChEBI" id="CHEBI:456215"/>
        <dbReference type="EC" id="6.1.1.16"/>
    </reaction>
</comment>
<comment type="cofactor">
    <cofactor evidence="1">
        <name>Zn(2+)</name>
        <dbReference type="ChEBI" id="CHEBI:29105"/>
    </cofactor>
    <text evidence="1">Binds 1 zinc ion per subunit.</text>
</comment>
<comment type="subunit">
    <text evidence="1">Monomer.</text>
</comment>
<comment type="subcellular location">
    <subcellularLocation>
        <location evidence="1">Cytoplasm</location>
    </subcellularLocation>
</comment>
<comment type="similarity">
    <text evidence="2">Belongs to the class-I aminoacyl-tRNA synthetase family.</text>
</comment>
<gene>
    <name type="primary">cysS</name>
    <name type="ordered locus">CT2158</name>
</gene>
<organism>
    <name type="scientific">Chlorobaculum tepidum (strain ATCC 49652 / DSM 12025 / NBRC 103806 / TLS)</name>
    <name type="common">Chlorobium tepidum</name>
    <dbReference type="NCBI Taxonomy" id="194439"/>
    <lineage>
        <taxon>Bacteria</taxon>
        <taxon>Pseudomonadati</taxon>
        <taxon>Chlorobiota</taxon>
        <taxon>Chlorobiia</taxon>
        <taxon>Chlorobiales</taxon>
        <taxon>Chlorobiaceae</taxon>
        <taxon>Chlorobaculum</taxon>
    </lineage>
</organism>
<evidence type="ECO:0000250" key="1"/>
<evidence type="ECO:0000305" key="2"/>
<accession>Q8KAK2</accession>
<feature type="chain" id="PRO_0000159378" description="Cysteine--tRNA ligase">
    <location>
        <begin position="1"/>
        <end position="487"/>
    </location>
</feature>
<feature type="short sequence motif" description="'HIGH' region">
    <location>
        <begin position="32"/>
        <end position="42"/>
    </location>
</feature>
<feature type="short sequence motif" description="'KMSKS' region">
    <location>
        <begin position="283"/>
        <end position="287"/>
    </location>
</feature>
<feature type="binding site" evidence="1">
    <location>
        <position position="30"/>
    </location>
    <ligand>
        <name>Zn(2+)</name>
        <dbReference type="ChEBI" id="CHEBI:29105"/>
    </ligand>
</feature>
<feature type="binding site" evidence="1">
    <location>
        <position position="226"/>
    </location>
    <ligand>
        <name>Zn(2+)</name>
        <dbReference type="ChEBI" id="CHEBI:29105"/>
    </ligand>
</feature>
<feature type="binding site" evidence="1">
    <location>
        <position position="251"/>
    </location>
    <ligand>
        <name>Zn(2+)</name>
        <dbReference type="ChEBI" id="CHEBI:29105"/>
    </ligand>
</feature>
<feature type="binding site" evidence="1">
    <location>
        <position position="255"/>
    </location>
    <ligand>
        <name>Zn(2+)</name>
        <dbReference type="ChEBI" id="CHEBI:29105"/>
    </ligand>
</feature>
<feature type="binding site" evidence="1">
    <location>
        <position position="286"/>
    </location>
    <ligand>
        <name>ATP</name>
        <dbReference type="ChEBI" id="CHEBI:30616"/>
    </ligand>
</feature>
<name>SYC_CHLTE</name>
<dbReference type="EC" id="6.1.1.16"/>
<dbReference type="EMBL" id="AE006470">
    <property type="protein sequence ID" value="AAM73374.1"/>
    <property type="molecule type" value="Genomic_DNA"/>
</dbReference>
<dbReference type="RefSeq" id="NP_663032.1">
    <property type="nucleotide sequence ID" value="NC_002932.3"/>
</dbReference>
<dbReference type="RefSeq" id="WP_010933811.1">
    <property type="nucleotide sequence ID" value="NC_002932.3"/>
</dbReference>
<dbReference type="SMR" id="Q8KAK2"/>
<dbReference type="STRING" id="194439.CT2158"/>
<dbReference type="EnsemblBacteria" id="AAM73374">
    <property type="protein sequence ID" value="AAM73374"/>
    <property type="gene ID" value="CT2158"/>
</dbReference>
<dbReference type="KEGG" id="cte:CT2158"/>
<dbReference type="PATRIC" id="fig|194439.7.peg.1957"/>
<dbReference type="eggNOG" id="COG0215">
    <property type="taxonomic scope" value="Bacteria"/>
</dbReference>
<dbReference type="HOGENOM" id="CLU_013528_0_1_10"/>
<dbReference type="OrthoDB" id="9815130at2"/>
<dbReference type="Proteomes" id="UP000001007">
    <property type="component" value="Chromosome"/>
</dbReference>
<dbReference type="GO" id="GO:0005829">
    <property type="term" value="C:cytosol"/>
    <property type="evidence" value="ECO:0007669"/>
    <property type="project" value="TreeGrafter"/>
</dbReference>
<dbReference type="GO" id="GO:0005524">
    <property type="term" value="F:ATP binding"/>
    <property type="evidence" value="ECO:0007669"/>
    <property type="project" value="UniProtKB-UniRule"/>
</dbReference>
<dbReference type="GO" id="GO:0004817">
    <property type="term" value="F:cysteine-tRNA ligase activity"/>
    <property type="evidence" value="ECO:0007669"/>
    <property type="project" value="UniProtKB-UniRule"/>
</dbReference>
<dbReference type="GO" id="GO:0008270">
    <property type="term" value="F:zinc ion binding"/>
    <property type="evidence" value="ECO:0007669"/>
    <property type="project" value="UniProtKB-UniRule"/>
</dbReference>
<dbReference type="GO" id="GO:0006423">
    <property type="term" value="P:cysteinyl-tRNA aminoacylation"/>
    <property type="evidence" value="ECO:0007669"/>
    <property type="project" value="UniProtKB-UniRule"/>
</dbReference>
<dbReference type="CDD" id="cd00672">
    <property type="entry name" value="CysRS_core"/>
    <property type="match status" value="1"/>
</dbReference>
<dbReference type="Gene3D" id="1.20.120.1910">
    <property type="entry name" value="Cysteine-tRNA ligase, C-terminal anti-codon recognition domain"/>
    <property type="match status" value="1"/>
</dbReference>
<dbReference type="Gene3D" id="3.40.50.620">
    <property type="entry name" value="HUPs"/>
    <property type="match status" value="1"/>
</dbReference>
<dbReference type="HAMAP" id="MF_00041">
    <property type="entry name" value="Cys_tRNA_synth"/>
    <property type="match status" value="1"/>
</dbReference>
<dbReference type="InterPro" id="IPR015803">
    <property type="entry name" value="Cys-tRNA-ligase"/>
</dbReference>
<dbReference type="InterPro" id="IPR015273">
    <property type="entry name" value="Cys-tRNA-synt_Ia_DALR"/>
</dbReference>
<dbReference type="InterPro" id="IPR024909">
    <property type="entry name" value="Cys-tRNA/MSH_ligase"/>
</dbReference>
<dbReference type="InterPro" id="IPR014729">
    <property type="entry name" value="Rossmann-like_a/b/a_fold"/>
</dbReference>
<dbReference type="InterPro" id="IPR032678">
    <property type="entry name" value="tRNA-synt_1_cat_dom"/>
</dbReference>
<dbReference type="InterPro" id="IPR009080">
    <property type="entry name" value="tRNAsynth_Ia_anticodon-bd"/>
</dbReference>
<dbReference type="NCBIfam" id="TIGR00435">
    <property type="entry name" value="cysS"/>
    <property type="match status" value="1"/>
</dbReference>
<dbReference type="PANTHER" id="PTHR10890:SF3">
    <property type="entry name" value="CYSTEINE--TRNA LIGASE, CYTOPLASMIC"/>
    <property type="match status" value="1"/>
</dbReference>
<dbReference type="PANTHER" id="PTHR10890">
    <property type="entry name" value="CYSTEINYL-TRNA SYNTHETASE"/>
    <property type="match status" value="1"/>
</dbReference>
<dbReference type="Pfam" id="PF09190">
    <property type="entry name" value="DALR_2"/>
    <property type="match status" value="1"/>
</dbReference>
<dbReference type="Pfam" id="PF01406">
    <property type="entry name" value="tRNA-synt_1e"/>
    <property type="match status" value="1"/>
</dbReference>
<dbReference type="PRINTS" id="PR00983">
    <property type="entry name" value="TRNASYNTHCYS"/>
</dbReference>
<dbReference type="SMART" id="SM00840">
    <property type="entry name" value="DALR_2"/>
    <property type="match status" value="1"/>
</dbReference>
<dbReference type="SUPFAM" id="SSF47323">
    <property type="entry name" value="Anticodon-binding domain of a subclass of class I aminoacyl-tRNA synthetases"/>
    <property type="match status" value="1"/>
</dbReference>
<dbReference type="SUPFAM" id="SSF52374">
    <property type="entry name" value="Nucleotidylyl transferase"/>
    <property type="match status" value="1"/>
</dbReference>